<dbReference type="EC" id="3.5.4.16"/>
<dbReference type="EMBL" id="AE007317">
    <property type="protein sequence ID" value="AAK99072.1"/>
    <property type="molecule type" value="Genomic_DNA"/>
</dbReference>
<dbReference type="RefSeq" id="NP_357862.1">
    <property type="nucleotide sequence ID" value="NC_003098.1"/>
</dbReference>
<dbReference type="RefSeq" id="WP_000380915.1">
    <property type="nucleotide sequence ID" value="NC_003098.1"/>
</dbReference>
<dbReference type="SMR" id="P59656"/>
<dbReference type="STRING" id="171101.spr0268"/>
<dbReference type="KEGG" id="spr:spr0268"/>
<dbReference type="PATRIC" id="fig|171101.6.peg.305"/>
<dbReference type="eggNOG" id="COG0302">
    <property type="taxonomic scope" value="Bacteria"/>
</dbReference>
<dbReference type="HOGENOM" id="CLU_049768_3_3_9"/>
<dbReference type="UniPathway" id="UPA00848">
    <property type="reaction ID" value="UER00151"/>
</dbReference>
<dbReference type="Proteomes" id="UP000000586">
    <property type="component" value="Chromosome"/>
</dbReference>
<dbReference type="GO" id="GO:0005737">
    <property type="term" value="C:cytoplasm"/>
    <property type="evidence" value="ECO:0000318"/>
    <property type="project" value="GO_Central"/>
</dbReference>
<dbReference type="GO" id="GO:0005525">
    <property type="term" value="F:GTP binding"/>
    <property type="evidence" value="ECO:0000318"/>
    <property type="project" value="GO_Central"/>
</dbReference>
<dbReference type="GO" id="GO:0003934">
    <property type="term" value="F:GTP cyclohydrolase I activity"/>
    <property type="evidence" value="ECO:0000318"/>
    <property type="project" value="GO_Central"/>
</dbReference>
<dbReference type="GO" id="GO:0008270">
    <property type="term" value="F:zinc ion binding"/>
    <property type="evidence" value="ECO:0000318"/>
    <property type="project" value="GO_Central"/>
</dbReference>
<dbReference type="GO" id="GO:0006730">
    <property type="term" value="P:one-carbon metabolic process"/>
    <property type="evidence" value="ECO:0007669"/>
    <property type="project" value="UniProtKB-UniRule"/>
</dbReference>
<dbReference type="GO" id="GO:0006729">
    <property type="term" value="P:tetrahydrobiopterin biosynthetic process"/>
    <property type="evidence" value="ECO:0000318"/>
    <property type="project" value="GO_Central"/>
</dbReference>
<dbReference type="GO" id="GO:0046654">
    <property type="term" value="P:tetrahydrofolate biosynthetic process"/>
    <property type="evidence" value="ECO:0007669"/>
    <property type="project" value="UniProtKB-UniRule"/>
</dbReference>
<dbReference type="CDD" id="cd00642">
    <property type="entry name" value="GTP_cyclohydro1"/>
    <property type="match status" value="1"/>
</dbReference>
<dbReference type="FunFam" id="1.10.286.10:FF:000001">
    <property type="entry name" value="GTP cyclohydrolase 1"/>
    <property type="match status" value="1"/>
</dbReference>
<dbReference type="FunFam" id="3.30.1130.10:FF:000001">
    <property type="entry name" value="GTP cyclohydrolase 1"/>
    <property type="match status" value="1"/>
</dbReference>
<dbReference type="Gene3D" id="1.10.286.10">
    <property type="match status" value="1"/>
</dbReference>
<dbReference type="Gene3D" id="3.30.1130.10">
    <property type="match status" value="1"/>
</dbReference>
<dbReference type="HAMAP" id="MF_00223">
    <property type="entry name" value="FolE"/>
    <property type="match status" value="1"/>
</dbReference>
<dbReference type="InterPro" id="IPR043133">
    <property type="entry name" value="GTP-CH-I_C/QueF"/>
</dbReference>
<dbReference type="InterPro" id="IPR043134">
    <property type="entry name" value="GTP-CH-I_N"/>
</dbReference>
<dbReference type="InterPro" id="IPR001474">
    <property type="entry name" value="GTP_CycHdrlase_I"/>
</dbReference>
<dbReference type="InterPro" id="IPR018234">
    <property type="entry name" value="GTP_CycHdrlase_I_CS"/>
</dbReference>
<dbReference type="InterPro" id="IPR020602">
    <property type="entry name" value="GTP_CycHdrlase_I_dom"/>
</dbReference>
<dbReference type="NCBIfam" id="TIGR00063">
    <property type="entry name" value="folE"/>
    <property type="match status" value="1"/>
</dbReference>
<dbReference type="NCBIfam" id="NF006825">
    <property type="entry name" value="PRK09347.1-2"/>
    <property type="match status" value="1"/>
</dbReference>
<dbReference type="NCBIfam" id="NF006826">
    <property type="entry name" value="PRK09347.1-3"/>
    <property type="match status" value="1"/>
</dbReference>
<dbReference type="PANTHER" id="PTHR11109:SF7">
    <property type="entry name" value="GTP CYCLOHYDROLASE 1"/>
    <property type="match status" value="1"/>
</dbReference>
<dbReference type="PANTHER" id="PTHR11109">
    <property type="entry name" value="GTP CYCLOHYDROLASE I"/>
    <property type="match status" value="1"/>
</dbReference>
<dbReference type="Pfam" id="PF01227">
    <property type="entry name" value="GTP_cyclohydroI"/>
    <property type="match status" value="1"/>
</dbReference>
<dbReference type="SUPFAM" id="SSF55620">
    <property type="entry name" value="Tetrahydrobiopterin biosynthesis enzymes-like"/>
    <property type="match status" value="1"/>
</dbReference>
<dbReference type="PROSITE" id="PS00859">
    <property type="entry name" value="GTP_CYCLOHYDROL_1_1"/>
    <property type="match status" value="1"/>
</dbReference>
<dbReference type="PROSITE" id="PS00860">
    <property type="entry name" value="GTP_CYCLOHYDROL_1_2"/>
    <property type="match status" value="1"/>
</dbReference>
<sequence>MDTQKIEAAVKMIIEAVGEDANREGLQETPARVARMYQEIFSGLGQTAEEHLSKSFEIIDDNMVVEKDIFFHTMCEHHFLPFYGRAHIAYIPDGRVAGLSKLARTVEVYSKKPQIQERLNIEVADALMDYLGAKGAFVIIEAEHMCMSMRGVRKPGTATLTTVARGLFETDKDLRDQAYRLMGL</sequence>
<organism>
    <name type="scientific">Streptococcus pneumoniae (strain ATCC BAA-255 / R6)</name>
    <dbReference type="NCBI Taxonomy" id="171101"/>
    <lineage>
        <taxon>Bacteria</taxon>
        <taxon>Bacillati</taxon>
        <taxon>Bacillota</taxon>
        <taxon>Bacilli</taxon>
        <taxon>Lactobacillales</taxon>
        <taxon>Streptococcaceae</taxon>
        <taxon>Streptococcus</taxon>
    </lineage>
</organism>
<keyword id="KW-0342">GTP-binding</keyword>
<keyword id="KW-0378">Hydrolase</keyword>
<keyword id="KW-0479">Metal-binding</keyword>
<keyword id="KW-0547">Nucleotide-binding</keyword>
<keyword id="KW-0554">One-carbon metabolism</keyword>
<keyword id="KW-1185">Reference proteome</keyword>
<keyword id="KW-0862">Zinc</keyword>
<protein>
    <recommendedName>
        <fullName>GTP cyclohydrolase 1</fullName>
        <ecNumber>3.5.4.16</ecNumber>
    </recommendedName>
    <alternativeName>
        <fullName>GTP cyclohydrolase I</fullName>
        <shortName>GTP-CH-I</shortName>
    </alternativeName>
</protein>
<gene>
    <name type="primary">folE</name>
    <name type="synonym">sulC</name>
    <name type="ordered locus">spr0268</name>
</gene>
<name>GCH1_STRR6</name>
<evidence type="ECO:0000250" key="1"/>
<evidence type="ECO:0000305" key="2"/>
<feature type="chain" id="PRO_0000119450" description="GTP cyclohydrolase 1">
    <location>
        <begin position="1"/>
        <end position="184"/>
    </location>
</feature>
<feature type="binding site" evidence="1">
    <location>
        <position position="75"/>
    </location>
    <ligand>
        <name>Zn(2+)</name>
        <dbReference type="ChEBI" id="CHEBI:29105"/>
    </ligand>
</feature>
<feature type="binding site" evidence="1">
    <location>
        <position position="78"/>
    </location>
    <ligand>
        <name>Zn(2+)</name>
        <dbReference type="ChEBI" id="CHEBI:29105"/>
    </ligand>
</feature>
<feature type="binding site" evidence="1">
    <location>
        <position position="146"/>
    </location>
    <ligand>
        <name>Zn(2+)</name>
        <dbReference type="ChEBI" id="CHEBI:29105"/>
    </ligand>
</feature>
<accession>P59656</accession>
<proteinExistence type="inferred from homology"/>
<comment type="catalytic activity">
    <reaction>
        <text>GTP + H2O = 7,8-dihydroneopterin 3'-triphosphate + formate + H(+)</text>
        <dbReference type="Rhea" id="RHEA:17473"/>
        <dbReference type="ChEBI" id="CHEBI:15377"/>
        <dbReference type="ChEBI" id="CHEBI:15378"/>
        <dbReference type="ChEBI" id="CHEBI:15740"/>
        <dbReference type="ChEBI" id="CHEBI:37565"/>
        <dbReference type="ChEBI" id="CHEBI:58462"/>
        <dbReference type="EC" id="3.5.4.16"/>
    </reaction>
</comment>
<comment type="pathway">
    <text>Cofactor biosynthesis; 7,8-dihydroneopterin triphosphate biosynthesis; 7,8-dihydroneopterin triphosphate from GTP: step 1/1.</text>
</comment>
<comment type="subunit">
    <text evidence="1">Toroid-shaped homodecamer, composed of two pentamers of five dimers.</text>
</comment>
<comment type="similarity">
    <text evidence="2">Belongs to the GTP cyclohydrolase I family.</text>
</comment>
<reference key="1">
    <citation type="journal article" date="2001" name="J. Bacteriol.">
        <title>Genome of the bacterium Streptococcus pneumoniae strain R6.</title>
        <authorList>
            <person name="Hoskins J."/>
            <person name="Alborn W.E. Jr."/>
            <person name="Arnold J."/>
            <person name="Blaszczak L.C."/>
            <person name="Burgett S."/>
            <person name="DeHoff B.S."/>
            <person name="Estrem S.T."/>
            <person name="Fritz L."/>
            <person name="Fu D.-J."/>
            <person name="Fuller W."/>
            <person name="Geringer C."/>
            <person name="Gilmour R."/>
            <person name="Glass J.S."/>
            <person name="Khoja H."/>
            <person name="Kraft A.R."/>
            <person name="Lagace R.E."/>
            <person name="LeBlanc D.J."/>
            <person name="Lee L.N."/>
            <person name="Lefkowitz E.J."/>
            <person name="Lu J."/>
            <person name="Matsushima P."/>
            <person name="McAhren S.M."/>
            <person name="McHenney M."/>
            <person name="McLeaster K."/>
            <person name="Mundy C.W."/>
            <person name="Nicas T.I."/>
            <person name="Norris F.H."/>
            <person name="O'Gara M."/>
            <person name="Peery R.B."/>
            <person name="Robertson G.T."/>
            <person name="Rockey P."/>
            <person name="Sun P.-M."/>
            <person name="Winkler M.E."/>
            <person name="Yang Y."/>
            <person name="Young-Bellido M."/>
            <person name="Zhao G."/>
            <person name="Zook C.A."/>
            <person name="Baltz R.H."/>
            <person name="Jaskunas S.R."/>
            <person name="Rosteck P.R. Jr."/>
            <person name="Skatrud P.L."/>
            <person name="Glass J.I."/>
        </authorList>
    </citation>
    <scope>NUCLEOTIDE SEQUENCE [LARGE SCALE GENOMIC DNA]</scope>
    <source>
        <strain>ATCC BAA-255 / R6</strain>
    </source>
</reference>